<feature type="chain" id="PRO_0000437888" description="Non-reducing polyketide synthase nscA">
    <location>
        <begin position="1"/>
        <end position="1794"/>
    </location>
</feature>
<feature type="domain" description="Ketosynthase family 3 (KS3)" evidence="5">
    <location>
        <begin position="389"/>
        <end position="822"/>
    </location>
</feature>
<feature type="domain" description="PKS/mFAS DH" evidence="6">
    <location>
        <begin position="1318"/>
        <end position="1628"/>
    </location>
</feature>
<feature type="domain" description="Carrier" evidence="4">
    <location>
        <begin position="1717"/>
        <end position="1794"/>
    </location>
</feature>
<feature type="region of interest" description="N-terminal acylcarrier protein transacylase domain (SAT)" evidence="3">
    <location>
        <begin position="19"/>
        <end position="256"/>
    </location>
</feature>
<feature type="region of interest" description="Disordered" evidence="7">
    <location>
        <begin position="427"/>
        <end position="448"/>
    </location>
</feature>
<feature type="region of interest" description="Malonyl-CoA:ACP transacylase (MAT) domain" evidence="3">
    <location>
        <begin position="928"/>
        <end position="1249"/>
    </location>
</feature>
<feature type="region of interest" description="Product template (PT) domain" evidence="3">
    <location>
        <begin position="1314"/>
        <end position="1633"/>
    </location>
</feature>
<feature type="region of interest" description="N-terminal hotdog fold" evidence="6">
    <location>
        <begin position="1318"/>
        <end position="1454"/>
    </location>
</feature>
<feature type="region of interest" description="C-terminal hotdog fold" evidence="6">
    <location>
        <begin position="1482"/>
        <end position="1628"/>
    </location>
</feature>
<feature type="region of interest" description="Disordered" evidence="7">
    <location>
        <begin position="1637"/>
        <end position="1665"/>
    </location>
</feature>
<feature type="region of interest" description="Disordered" evidence="7">
    <location>
        <begin position="1682"/>
        <end position="1718"/>
    </location>
</feature>
<feature type="compositionally biased region" description="Basic and acidic residues" evidence="7">
    <location>
        <begin position="428"/>
        <end position="440"/>
    </location>
</feature>
<feature type="compositionally biased region" description="Polar residues" evidence="7">
    <location>
        <begin position="1644"/>
        <end position="1655"/>
    </location>
</feature>
<feature type="compositionally biased region" description="Polar residues" evidence="7">
    <location>
        <begin position="1685"/>
        <end position="1701"/>
    </location>
</feature>
<feature type="active site" description="For beta-ketoacyl synthase activity" evidence="5">
    <location>
        <position position="562"/>
    </location>
</feature>
<feature type="active site" description="For beta-ketoacyl synthase activity" evidence="5">
    <location>
        <position position="697"/>
    </location>
</feature>
<feature type="active site" description="For beta-ketoacyl synthase activity" evidence="5">
    <location>
        <position position="740"/>
    </location>
</feature>
<feature type="active site" description="Proton acceptor; for dehydratase activity" evidence="6">
    <location>
        <position position="1350"/>
    </location>
</feature>
<feature type="active site" description="Proton donor; for dehydratase activity" evidence="6">
    <location>
        <position position="1539"/>
    </location>
</feature>
<feature type="modified residue" description="O-(pantetheine 4'-phosphoryl)serine" evidence="4">
    <location>
        <position position="1754"/>
    </location>
</feature>
<gene>
    <name evidence="9" type="primary">nscA</name>
    <name type="ORF">NFIA_112240</name>
</gene>
<keyword id="KW-0012">Acyltransferase</keyword>
<keyword id="KW-0511">Multifunctional enzyme</keyword>
<keyword id="KW-0596">Phosphopantetheine</keyword>
<keyword id="KW-0597">Phosphoprotein</keyword>
<keyword id="KW-1185">Reference proteome</keyword>
<keyword id="KW-0808">Transferase</keyword>
<name>NSCA_NEOFI</name>
<evidence type="ECO:0000250" key="1">
    <source>
        <dbReference type="UniProtKB" id="A0A0K0MCJ4"/>
    </source>
</evidence>
<evidence type="ECO:0000250" key="2">
    <source>
        <dbReference type="UniProtKB" id="Q5B0D0"/>
    </source>
</evidence>
<evidence type="ECO:0000255" key="3"/>
<evidence type="ECO:0000255" key="4">
    <source>
        <dbReference type="PROSITE-ProRule" id="PRU00258"/>
    </source>
</evidence>
<evidence type="ECO:0000255" key="5">
    <source>
        <dbReference type="PROSITE-ProRule" id="PRU01348"/>
    </source>
</evidence>
<evidence type="ECO:0000255" key="6">
    <source>
        <dbReference type="PROSITE-ProRule" id="PRU01363"/>
    </source>
</evidence>
<evidence type="ECO:0000256" key="7">
    <source>
        <dbReference type="SAM" id="MobiDB-lite"/>
    </source>
</evidence>
<evidence type="ECO:0000269" key="8">
    <source>
    </source>
</evidence>
<evidence type="ECO:0000303" key="9">
    <source>
    </source>
</evidence>
<evidence type="ECO:0000303" key="10">
    <source>
    </source>
</evidence>
<evidence type="ECO:0000305" key="11">
    <source>
    </source>
</evidence>
<evidence type="ECO:0000305" key="12">
    <source>
    </source>
</evidence>
<comment type="function">
    <text evidence="8 12">Non-reducing polyketide synthase; part of the gene cluster that mediates the biosynthesis of neosartoricin, a prenylated anthracenone that exhibits T-cell antiproliferative activity, suggestive of a physiological role as an immunosuppressive agent (PubMed:23368997, PubMed:23758576). The non-reducing polyketide synthase nscA probably synthesizes and cyclizes the decaketide backbone (PubMed:23368997). The hydrolase nscB then mediates the product release through hydrolysis followed by spontaneous decarboxylation (PubMed:23368997). The prenyltransferase nscD catalyzes the addition of the dimethylallyl group to the aromatic C5 (PubMed:23368997). The FAD-dependent monooxygenase nscC is then responsible for the stereospecific hydroxylation at C2 (PubMed:23368997). There is no gene encoding O-acetyltransferase in the nsc gene cluster; thus, the last step of 2-O-acetylation leading to neosartoricin may be catalyzed by an unidentified O-acetyltransferase (PubMed:23368997).</text>
</comment>
<comment type="cofactor">
    <cofactor evidence="1">
        <name>pantetheine 4'-phosphate</name>
        <dbReference type="ChEBI" id="CHEBI:47942"/>
    </cofactor>
    <text evidence="3">Binds 1 phosphopantetheine covalently.</text>
</comment>
<comment type="pathway">
    <text evidence="8">Secondary metabolite biosynthesis.</text>
</comment>
<comment type="domain">
    <text evidence="2">Multidomain protein; including a starter unit:ACP transacylase (SAT) that selects the starter unit; a ketosynthase (KS) that catalyzes repeated decarboxylative condensation to elongate the polyketide backbone; a malonyl-CoA:ACP transacylase (MAT) that selects and transfers the extender unit malonyl-CoA; a product template (PT) domain that controls the immediate cyclization regioselectivity of the reactive polyketide backbone; and an acyl-carrier protein (ACP) that serves as the tether of the growing and completed polyketide via its phosphopantetheinyl arm (By similarity).</text>
</comment>
<sequence>MATPRGQTVWFGNEFPNDDLKDLFRRLHQHSKDRRFRLLSVFLDESTAILKEEVANLPQQLQELVPHFDTACTLPEVDFRQGPLGAAMESALLTILELGMLIGNYEAEDIEWDLDPSQTILAGLSIGIIAGAAVALSSSLADVAKVGAESVRVSFRLGVYVADISTKLEAPQSDGTLQSWAHVVTGMSHEAVQEELSQFNAVTQNPEITKVFVSAADKTSVSVTGPPSRIKAAFQHSPSLRYSKSLPLPVYDGLCHAPHLYSQDDIEIVINSAKSVIPTSRPVRLPLISSQTGKPFEAKTAGELFLEIGTELLTGTIYLDNVTAGILEHVKLKEPTGNYQIISFRMSQVLNGIQAAIETDFPALGRARRDLVSWVHGDYGARRPSSYAASKLAIVGMACRLPGGANDPELFWELLEQGRDTLTTVPPDRFDLNTHYDPTGKTENATQTPFGNFIDRPGYFDAGFFNMSPREAEQTDPMHRLALVTAYEAMEMAGLVPGRTPSTRPNRIGTFYGQASDDWRELNASQNISTYAVPGGERAFANGRINYFFKFSGPSYNIDTACSSGLAAVQAACSALWAGEADTVIAGGLNIITDPDNYAGLGNGHFLSKTGQCKVWDKDADGYCRADGIGSVVIKRLEDAEADNDNILAVVLGARTNHSAEAVSITHPHAGAQKANYRQVLHQAGVNPLDVSYVELHGTGTQAGDAVESESVSDVFAPSMPRRRPDQRLYLGAVKSNIGHGEAAAGIASLLKALLVYQKNMIPKHIGIKTEINPIIPKDLDRRHVGLAMSNTPWPRPAGKKRLAVVNSFGAHGGNTTVLLEDAPERVKVSTQDDRTTHPVVISAKSKKSLQANIEKLLSWLDQNPDADLADLSYTLCARRMHHSMRFGAAASDIAALQKTLRSWLDSPKASTELRAIPNDAPSVVLTFTGQGAYYSGMGRELFAEFSYFRTQVLQLDQIAQRLGFPSVVPVIDGSIDDGPASPILTQLSVVVLEIALARFWSHLGIRISAVVGHSLGEYAAFAVAGVISAADALYLVGRRAQLTEERCTQGSHSMLSVRASEDDIEELIAGSPDTAEIAYEVCCRNTPQDTVIGGTKESIDRIRQALEANSIKCTQLDVPFAFHTAQMDPILDSLETLATPIAFKAPSIPVLSPLLGSVVFDRKSIHAQYLRRATREAVDFVAAIEAAQDFGLVDAKTIWIDVGPHPICAGLVRGIDSSASVISSCRRNEDNLATMSKSLVTLHLAGLTPCWAEYFRPREREYSLLKLPTYSWNETDYWIPYIGTWTLDKALLKYGEKKAPLSLAMSRPSALRTSLVHQITAETVEATTATLHVLSDMQHPDFLEALHGHRMNNCGVATSSIWSDMAFTVGEYLYRRLVPQVKDVHMNLSDFEVLHAQVALEKKGSVQPLVLKAHLDLSTSSMSLTWFNASAETGECAAESFATGVVRFEDPAAWTREWDRLSHLVLGRIEALEQRAAEGKASKLSKPLAYALFKNVVDYADRYRGMDQVVLHEHEAVAEVTLVAERHGTWHTPPHWIDSVSHLAGLVMNGSDASNTRDYFYVTPGCSSFRLLNPLKAGGKYRSYVRMFPLLEEANMYAGDVYILQGEQIVGMVGQIRFRRVPRLLMDRFFSPAAASHAEKQLQETAPSATSVKKSTPPAAEAPASVPALLSNPVAIPFPAASKSEVSTPPLTPPSQQESPGESAVITPATSDRGDPVDAGVVGQCLQVMARETGLEVDALTPDASFVQLGIDSLMSLVLSEKFRAELGIEIKSSLFLECPTIGEMTAWLEEYC</sequence>
<dbReference type="EC" id="2.3.1.-" evidence="11"/>
<dbReference type="EMBL" id="DS027692">
    <property type="protein sequence ID" value="EAW20700.1"/>
    <property type="molecule type" value="Genomic_DNA"/>
</dbReference>
<dbReference type="RefSeq" id="XP_001262597.1">
    <property type="nucleotide sequence ID" value="XM_001262596.1"/>
</dbReference>
<dbReference type="SMR" id="A1D8I9"/>
<dbReference type="STRING" id="331117.A1D8I9"/>
<dbReference type="EnsemblFungi" id="EAW20700">
    <property type="protein sequence ID" value="EAW20700"/>
    <property type="gene ID" value="NFIA_112240"/>
</dbReference>
<dbReference type="GeneID" id="4589233"/>
<dbReference type="KEGG" id="nfi:NFIA_112240"/>
<dbReference type="VEuPathDB" id="FungiDB:NFIA_112240"/>
<dbReference type="eggNOG" id="KOG1202">
    <property type="taxonomic scope" value="Eukaryota"/>
</dbReference>
<dbReference type="HOGENOM" id="CLU_000022_6_1_1"/>
<dbReference type="OMA" id="LNTHYDP"/>
<dbReference type="OrthoDB" id="329835at2759"/>
<dbReference type="Proteomes" id="UP000006702">
    <property type="component" value="Unassembled WGS sequence"/>
</dbReference>
<dbReference type="GO" id="GO:0004315">
    <property type="term" value="F:3-oxoacyl-[acyl-carrier-protein] synthase activity"/>
    <property type="evidence" value="ECO:0007669"/>
    <property type="project" value="InterPro"/>
</dbReference>
<dbReference type="GO" id="GO:0004312">
    <property type="term" value="F:fatty acid synthase activity"/>
    <property type="evidence" value="ECO:0007669"/>
    <property type="project" value="TreeGrafter"/>
</dbReference>
<dbReference type="GO" id="GO:0031177">
    <property type="term" value="F:phosphopantetheine binding"/>
    <property type="evidence" value="ECO:0007669"/>
    <property type="project" value="InterPro"/>
</dbReference>
<dbReference type="GO" id="GO:0006633">
    <property type="term" value="P:fatty acid biosynthetic process"/>
    <property type="evidence" value="ECO:0007669"/>
    <property type="project" value="InterPro"/>
</dbReference>
<dbReference type="GO" id="GO:0044550">
    <property type="term" value="P:secondary metabolite biosynthetic process"/>
    <property type="evidence" value="ECO:0007669"/>
    <property type="project" value="TreeGrafter"/>
</dbReference>
<dbReference type="CDD" id="cd00833">
    <property type="entry name" value="PKS"/>
    <property type="match status" value="1"/>
</dbReference>
<dbReference type="FunFam" id="3.40.366.10:FF:000017">
    <property type="entry name" value="Non-reducing polyketide synthase aptA"/>
    <property type="match status" value="1"/>
</dbReference>
<dbReference type="FunFam" id="3.40.366.10:FF:000002">
    <property type="entry name" value="Probable polyketide synthase 2"/>
    <property type="match status" value="1"/>
</dbReference>
<dbReference type="FunFam" id="1.10.1200.10:FF:000011">
    <property type="entry name" value="Sterigmatocystin biosynthesis polyketide synthase"/>
    <property type="match status" value="1"/>
</dbReference>
<dbReference type="FunFam" id="3.10.129.110:FF:000001">
    <property type="entry name" value="Sterigmatocystin biosynthesis polyketide synthase"/>
    <property type="match status" value="1"/>
</dbReference>
<dbReference type="FunFam" id="3.40.47.10:FF:000031">
    <property type="entry name" value="Sterigmatocystin biosynthesis polyketide synthase"/>
    <property type="match status" value="1"/>
</dbReference>
<dbReference type="Gene3D" id="3.30.70.3290">
    <property type="match status" value="1"/>
</dbReference>
<dbReference type="Gene3D" id="3.40.47.10">
    <property type="match status" value="1"/>
</dbReference>
<dbReference type="Gene3D" id="1.10.1200.10">
    <property type="entry name" value="ACP-like"/>
    <property type="match status" value="1"/>
</dbReference>
<dbReference type="Gene3D" id="3.40.366.10">
    <property type="entry name" value="Malonyl-Coenzyme A Acyl Carrier Protein, domain 2"/>
    <property type="match status" value="2"/>
</dbReference>
<dbReference type="Gene3D" id="3.10.129.110">
    <property type="entry name" value="Polyketide synthase dehydratase"/>
    <property type="match status" value="1"/>
</dbReference>
<dbReference type="InterPro" id="IPR001227">
    <property type="entry name" value="Ac_transferase_dom_sf"/>
</dbReference>
<dbReference type="InterPro" id="IPR036736">
    <property type="entry name" value="ACP-like_sf"/>
</dbReference>
<dbReference type="InterPro" id="IPR014043">
    <property type="entry name" value="Acyl_transferase_dom"/>
</dbReference>
<dbReference type="InterPro" id="IPR016035">
    <property type="entry name" value="Acyl_Trfase/lysoPLipase"/>
</dbReference>
<dbReference type="InterPro" id="IPR018201">
    <property type="entry name" value="Ketoacyl_synth_AS"/>
</dbReference>
<dbReference type="InterPro" id="IPR014031">
    <property type="entry name" value="Ketoacyl_synth_C"/>
</dbReference>
<dbReference type="InterPro" id="IPR014030">
    <property type="entry name" value="Ketoacyl_synth_N"/>
</dbReference>
<dbReference type="InterPro" id="IPR016036">
    <property type="entry name" value="Malonyl_transacylase_ACP-bd"/>
</dbReference>
<dbReference type="InterPro" id="IPR020841">
    <property type="entry name" value="PKS_Beta-ketoAc_synthase_dom"/>
</dbReference>
<dbReference type="InterPro" id="IPR042104">
    <property type="entry name" value="PKS_dehydratase_sf"/>
</dbReference>
<dbReference type="InterPro" id="IPR049900">
    <property type="entry name" value="PKS_mFAS_DH"/>
</dbReference>
<dbReference type="InterPro" id="IPR050091">
    <property type="entry name" value="PKS_NRPS_Biosynth_Enz"/>
</dbReference>
<dbReference type="InterPro" id="IPR020806">
    <property type="entry name" value="PKS_PP-bd"/>
</dbReference>
<dbReference type="InterPro" id="IPR009081">
    <property type="entry name" value="PP-bd_ACP"/>
</dbReference>
<dbReference type="InterPro" id="IPR030918">
    <property type="entry name" value="PT_fungal_PKS"/>
</dbReference>
<dbReference type="InterPro" id="IPR032088">
    <property type="entry name" value="SAT"/>
</dbReference>
<dbReference type="InterPro" id="IPR016039">
    <property type="entry name" value="Thiolase-like"/>
</dbReference>
<dbReference type="NCBIfam" id="TIGR04532">
    <property type="entry name" value="PT_fungal_PKS"/>
    <property type="match status" value="1"/>
</dbReference>
<dbReference type="PANTHER" id="PTHR43775">
    <property type="entry name" value="FATTY ACID SYNTHASE"/>
    <property type="match status" value="1"/>
</dbReference>
<dbReference type="PANTHER" id="PTHR43775:SF24">
    <property type="entry name" value="NON-REDUCING POLYKETIDE SYNTHASE APTA-RELATED"/>
    <property type="match status" value="1"/>
</dbReference>
<dbReference type="Pfam" id="PF00698">
    <property type="entry name" value="Acyl_transf_1"/>
    <property type="match status" value="1"/>
</dbReference>
<dbReference type="Pfam" id="PF22621">
    <property type="entry name" value="CurL-like_PKS_C"/>
    <property type="match status" value="1"/>
</dbReference>
<dbReference type="Pfam" id="PF00109">
    <property type="entry name" value="ketoacyl-synt"/>
    <property type="match status" value="1"/>
</dbReference>
<dbReference type="Pfam" id="PF02801">
    <property type="entry name" value="Ketoacyl-synt_C"/>
    <property type="match status" value="1"/>
</dbReference>
<dbReference type="Pfam" id="PF00550">
    <property type="entry name" value="PP-binding"/>
    <property type="match status" value="1"/>
</dbReference>
<dbReference type="Pfam" id="PF16073">
    <property type="entry name" value="SAT"/>
    <property type="match status" value="1"/>
</dbReference>
<dbReference type="SMART" id="SM00827">
    <property type="entry name" value="PKS_AT"/>
    <property type="match status" value="1"/>
</dbReference>
<dbReference type="SMART" id="SM00825">
    <property type="entry name" value="PKS_KS"/>
    <property type="match status" value="1"/>
</dbReference>
<dbReference type="SMART" id="SM00823">
    <property type="entry name" value="PKS_PP"/>
    <property type="match status" value="1"/>
</dbReference>
<dbReference type="SUPFAM" id="SSF47336">
    <property type="entry name" value="ACP-like"/>
    <property type="match status" value="1"/>
</dbReference>
<dbReference type="SUPFAM" id="SSF52151">
    <property type="entry name" value="FabD/lysophospholipase-like"/>
    <property type="match status" value="1"/>
</dbReference>
<dbReference type="SUPFAM" id="SSF55048">
    <property type="entry name" value="Probable ACP-binding domain of malonyl-CoA ACP transacylase"/>
    <property type="match status" value="1"/>
</dbReference>
<dbReference type="SUPFAM" id="SSF53901">
    <property type="entry name" value="Thiolase-like"/>
    <property type="match status" value="1"/>
</dbReference>
<dbReference type="PROSITE" id="PS50075">
    <property type="entry name" value="CARRIER"/>
    <property type="match status" value="1"/>
</dbReference>
<dbReference type="PROSITE" id="PS00606">
    <property type="entry name" value="KS3_1"/>
    <property type="match status" value="1"/>
</dbReference>
<dbReference type="PROSITE" id="PS52004">
    <property type="entry name" value="KS3_2"/>
    <property type="match status" value="1"/>
</dbReference>
<dbReference type="PROSITE" id="PS52019">
    <property type="entry name" value="PKS_MFAS_DH"/>
    <property type="match status" value="1"/>
</dbReference>
<reference key="1">
    <citation type="journal article" date="2008" name="PLoS Genet.">
        <title>Genomic islands in the pathogenic filamentous fungus Aspergillus fumigatus.</title>
        <authorList>
            <person name="Fedorova N.D."/>
            <person name="Khaldi N."/>
            <person name="Joardar V.S."/>
            <person name="Maiti R."/>
            <person name="Amedeo P."/>
            <person name="Anderson M.J."/>
            <person name="Crabtree J."/>
            <person name="Silva J.C."/>
            <person name="Badger J.H."/>
            <person name="Albarraq A."/>
            <person name="Angiuoli S."/>
            <person name="Bussey H."/>
            <person name="Bowyer P."/>
            <person name="Cotty P.J."/>
            <person name="Dyer P.S."/>
            <person name="Egan A."/>
            <person name="Galens K."/>
            <person name="Fraser-Liggett C.M."/>
            <person name="Haas B.J."/>
            <person name="Inman J.M."/>
            <person name="Kent R."/>
            <person name="Lemieux S."/>
            <person name="Malavazi I."/>
            <person name="Orvis J."/>
            <person name="Roemer T."/>
            <person name="Ronning C.M."/>
            <person name="Sundaram J.P."/>
            <person name="Sutton G."/>
            <person name="Turner G."/>
            <person name="Venter J.C."/>
            <person name="White O.R."/>
            <person name="Whitty B.R."/>
            <person name="Youngman P."/>
            <person name="Wolfe K.H."/>
            <person name="Goldman G.H."/>
            <person name="Wortman J.R."/>
            <person name="Jiang B."/>
            <person name="Denning D.W."/>
            <person name="Nierman W.C."/>
        </authorList>
    </citation>
    <scope>NUCLEOTIDE SEQUENCE [LARGE SCALE GENOMIC DNA]</scope>
    <source>
        <strain>ATCC 1020 / DSM 3700 / CBS 544.65 / FGSC A1164 / JCM 1740 / NRRL 181 / WB 181</strain>
    </source>
</reference>
<reference key="2">
    <citation type="journal article" date="2013" name="ACS Synth. Biol.">
        <title>Discovery of cryptic polyketide metabolites from dermatophytes using heterologous expression in Aspergillus nidulans.</title>
        <authorList>
            <person name="Yin W.B."/>
            <person name="Chooi Y.H."/>
            <person name="Smith A.R."/>
            <person name="Cacho R.A."/>
            <person name="Hu Y."/>
            <person name="White T.C."/>
            <person name="Tang Y."/>
        </authorList>
    </citation>
    <scope>FUNCTION</scope>
</reference>
<reference key="3">
    <citation type="journal article" date="2013" name="Org. Lett.">
        <title>Genome mining of a prenylated and immunosuppressive polyketide from pathogenic fungi.</title>
        <authorList>
            <person name="Chooi Y.H."/>
            <person name="Fang J."/>
            <person name="Liu H."/>
            <person name="Filler S.G."/>
            <person name="Wang P."/>
            <person name="Tang Y."/>
        </authorList>
    </citation>
    <scope>FUNCTION</scope>
</reference>
<organism>
    <name type="scientific">Neosartorya fischeri (strain ATCC 1020 / DSM 3700 / CBS 544.65 / FGSC A1164 / JCM 1740 / NRRL 181 / WB 181)</name>
    <name type="common">Aspergillus fischerianus</name>
    <dbReference type="NCBI Taxonomy" id="331117"/>
    <lineage>
        <taxon>Eukaryota</taxon>
        <taxon>Fungi</taxon>
        <taxon>Dikarya</taxon>
        <taxon>Ascomycota</taxon>
        <taxon>Pezizomycotina</taxon>
        <taxon>Eurotiomycetes</taxon>
        <taxon>Eurotiomycetidae</taxon>
        <taxon>Eurotiales</taxon>
        <taxon>Aspergillaceae</taxon>
        <taxon>Aspergillus</taxon>
        <taxon>Aspergillus subgen. Fumigati</taxon>
    </lineage>
</organism>
<accession>A1D8I9</accession>
<proteinExistence type="inferred from homology"/>
<protein>
    <recommendedName>
        <fullName evidence="9">Non-reducing polyketide synthase nscA</fullName>
        <ecNumber evidence="11">2.3.1.-</ecNumber>
    </recommendedName>
    <alternativeName>
        <fullName evidence="9">Conidial yellow pigment biosynthesis polyketide synthase nscA</fullName>
    </alternativeName>
    <alternativeName>
        <fullName evidence="10">Neosartoricin biosynthesis protein A</fullName>
    </alternativeName>
</protein>